<dbReference type="EC" id="3.2.1.55"/>
<dbReference type="EMBL" id="Z69252">
    <property type="protein sequence ID" value="CAA93243.1"/>
    <property type="molecule type" value="mRNA"/>
</dbReference>
<dbReference type="SMR" id="Q92455"/>
<dbReference type="CAZy" id="CBM42">
    <property type="family name" value="Carbohydrate-Binding Module Family 42"/>
</dbReference>
<dbReference type="CAZy" id="GH54">
    <property type="family name" value="Glycoside Hydrolase Family 54"/>
</dbReference>
<dbReference type="GlyCosmos" id="Q92455">
    <property type="glycosylation" value="1 site, No reported glycans"/>
</dbReference>
<dbReference type="KEGG" id="ag:CAA93243"/>
<dbReference type="VEuPathDB" id="FungiDB:TrQ_005417"/>
<dbReference type="OMA" id="WNYPTRY"/>
<dbReference type="BioCyc" id="MetaCyc:MONOMER-16540"/>
<dbReference type="UniPathway" id="UPA00667"/>
<dbReference type="GO" id="GO:0046556">
    <property type="term" value="F:alpha-L-arabinofuranosidase activity"/>
    <property type="evidence" value="ECO:0007669"/>
    <property type="project" value="UniProtKB-EC"/>
</dbReference>
<dbReference type="GO" id="GO:0031222">
    <property type="term" value="P:arabinan catabolic process"/>
    <property type="evidence" value="ECO:0007669"/>
    <property type="project" value="UniProtKB-UniPathway"/>
</dbReference>
<dbReference type="GO" id="GO:0046373">
    <property type="term" value="P:L-arabinose metabolic process"/>
    <property type="evidence" value="ECO:0007669"/>
    <property type="project" value="InterPro"/>
</dbReference>
<dbReference type="GO" id="GO:0045490">
    <property type="term" value="P:pectin catabolic process"/>
    <property type="evidence" value="ECO:0007669"/>
    <property type="project" value="TreeGrafter"/>
</dbReference>
<dbReference type="CDD" id="cd23399">
    <property type="entry name" value="beta-trefoil_ABD_ABFB"/>
    <property type="match status" value="1"/>
</dbReference>
<dbReference type="FunFam" id="2.60.120.200:FF:000131">
    <property type="entry name" value="Probable alpha-L-arabinofuranosidase B"/>
    <property type="match status" value="1"/>
</dbReference>
<dbReference type="FunFam" id="2.80.10.50:FF:000059">
    <property type="entry name" value="Probable alpha-L-arabinofuranosidase B"/>
    <property type="match status" value="1"/>
</dbReference>
<dbReference type="Gene3D" id="2.60.120.200">
    <property type="match status" value="1"/>
</dbReference>
<dbReference type="Gene3D" id="2.80.10.50">
    <property type="match status" value="1"/>
</dbReference>
<dbReference type="InterPro" id="IPR015289">
    <property type="entry name" value="A-L-arabinofuranosidase_B_cat"/>
</dbReference>
<dbReference type="InterPro" id="IPR038964">
    <property type="entry name" value="ABFB"/>
</dbReference>
<dbReference type="InterPro" id="IPR007934">
    <property type="entry name" value="AbfB_ABD"/>
</dbReference>
<dbReference type="InterPro" id="IPR036195">
    <property type="entry name" value="AbfB_ABD_sf"/>
</dbReference>
<dbReference type="InterPro" id="IPR013320">
    <property type="entry name" value="ConA-like_dom_sf"/>
</dbReference>
<dbReference type="PANTHER" id="PTHR39447">
    <property type="entry name" value="ALPHA-L-ARABINOFURANOSIDASE B"/>
    <property type="match status" value="1"/>
</dbReference>
<dbReference type="PANTHER" id="PTHR39447:SF2">
    <property type="entry name" value="ALPHA-L-ARABINOFURANOSIDASE B"/>
    <property type="match status" value="1"/>
</dbReference>
<dbReference type="Pfam" id="PF05270">
    <property type="entry name" value="AbfB"/>
    <property type="match status" value="1"/>
</dbReference>
<dbReference type="Pfam" id="PF09206">
    <property type="entry name" value="ArabFuran-catal"/>
    <property type="match status" value="1"/>
</dbReference>
<dbReference type="SUPFAM" id="SSF110221">
    <property type="entry name" value="AbfB domain"/>
    <property type="match status" value="1"/>
</dbReference>
<dbReference type="SUPFAM" id="SSF49899">
    <property type="entry name" value="Concanavalin A-like lectins/glucanases"/>
    <property type="match status" value="1"/>
</dbReference>
<protein>
    <recommendedName>
        <fullName>Alpha-L-arabinofuranosidase</fullName>
        <shortName>Arabinosidase</shortName>
        <ecNumber>3.2.1.55</ecNumber>
    </recommendedName>
</protein>
<evidence type="ECO:0000255" key="1"/>
<evidence type="ECO:0000305" key="2"/>
<feature type="signal peptide" evidence="1">
    <location>
        <begin position="1"/>
        <end position="21"/>
    </location>
</feature>
<feature type="chain" id="PRO_0000012224" description="Alpha-L-arabinofuranosidase">
    <location>
        <begin position="22"/>
        <end position="500"/>
    </location>
</feature>
<feature type="glycosylation site" description="N-linked (GlcNAc...) asparagine" evidence="1">
    <location>
        <position position="467"/>
    </location>
</feature>
<comment type="catalytic activity">
    <reaction>
        <text>Hydrolysis of terminal non-reducing alpha-L-arabinofuranoside residues in alpha-L-arabinosides.</text>
        <dbReference type="EC" id="3.2.1.55"/>
    </reaction>
</comment>
<comment type="pathway">
    <text>Glycan metabolism; L-arabinan degradation.</text>
</comment>
<comment type="similarity">
    <text evidence="2">Belongs to the glycosyl hydrolase 54 family.</text>
</comment>
<sequence>MLSNARIIAAGCIAAGSLVAAGPCDIYSSGGTPCVAAHSTTRALFSAYTGPLYQVKRGSDGATTAISPLSSGVANAAAQDAFCAGTTCLITIIYDQSGRGNHLTQAPPGGFSGPESNGYDNLASAIGAPVTLNGQKAYGVFVSPGTGYRNNAASGTAKGDAAEGMYAVLDGTHYNGACCFDYGNAETNSRDTGNGHMEAIYFGDSTVWGTGSGKGPWIMADLENGLFSGSSPGNNAGDPSISYRFVTAAIKGQPNQWAIRGGNAASGSLSTFYSGARPQVSGYNPMSKEGAIILGIGGDNSNGAQGTFYEGVMTSGYPSDATENSVQANIVAARYAVAPLTSGPALTVGSSISLRATTACCTTRYIAHSGSTVNTQVVSSSSATALKQQASWTVRAGLANNACFSFESRDTSGSYIRHSNFGLVLNANDGSKLFAEDATFCTQAGINGQGSSIRSWSYPTRYFRHYNNTLYIASNGGVHVFDATAAFNDDVSFVVSGGFA</sequence>
<name>ABF1_HYPJE</name>
<proteinExistence type="evidence at transcript level"/>
<keyword id="KW-0325">Glycoprotein</keyword>
<keyword id="KW-0326">Glycosidase</keyword>
<keyword id="KW-0378">Hydrolase</keyword>
<keyword id="KW-0732">Signal</keyword>
<organism>
    <name type="scientific">Hypocrea jecorina</name>
    <name type="common">Trichoderma reesei</name>
    <dbReference type="NCBI Taxonomy" id="51453"/>
    <lineage>
        <taxon>Eukaryota</taxon>
        <taxon>Fungi</taxon>
        <taxon>Dikarya</taxon>
        <taxon>Ascomycota</taxon>
        <taxon>Pezizomycotina</taxon>
        <taxon>Sordariomycetes</taxon>
        <taxon>Hypocreomycetidae</taxon>
        <taxon>Hypocreales</taxon>
        <taxon>Hypocreaceae</taxon>
        <taxon>Trichoderma</taxon>
    </lineage>
</organism>
<accession>Q92455</accession>
<gene>
    <name type="primary">abf1</name>
</gene>
<reference key="1">
    <citation type="journal article" date="1996" name="Appl. Environ. Microbiol.">
        <title>Cloning of genes encoding alpha-L-arabinofuranosidase and beta-xylosidase from Trichoderma reesei by expression in Saccharomyces cerevisiae.</title>
        <authorList>
            <person name="Margolles-Clark E."/>
            <person name="Tenkanen M."/>
            <person name="Nakari-Setaelae T."/>
            <person name="Penttilae M."/>
        </authorList>
    </citation>
    <scope>NUCLEOTIDE SEQUENCE [MRNA]</scope>
    <source>
        <strain>ATCC 56765 / Rut C-30</strain>
    </source>
</reference>